<evidence type="ECO:0000255" key="1"/>
<evidence type="ECO:0000255" key="2">
    <source>
        <dbReference type="PROSITE-ProRule" id="PRU00711"/>
    </source>
</evidence>
<evidence type="ECO:0000269" key="3">
    <source>
    </source>
</evidence>
<evidence type="ECO:0000269" key="4">
    <source>
    </source>
</evidence>
<evidence type="ECO:0000303" key="5">
    <source>
    </source>
</evidence>
<evidence type="ECO:0000305" key="6"/>
<gene>
    <name evidence="5" type="primary">hdrA2</name>
    <name type="ordered locus">MA_2868</name>
</gene>
<accession>Q8TM02</accession>
<sequence>MRIGVYICHCGLNIAGVIDVSALEAMANELEDVVLAREVQFLCSDSGQEGIIKDIKDNKLDRVVVAACSPRLHEKTFRHVMEKAGLNPYLMEMVNIREQCSWVHADDPQMATQKAFDLIRMGVAKARFLRELSATNSKASRNVLIIGGGVAGIEAALNLAEAGFPVTMVEKESTIGGKMALMNEVFPTNDCSICVLAPKMTEVQNHPNITLYTYSEVTDISGSVGKFHVRVKRKPRFVLEDKCKGCVDLCSGVCPVEIENPMNYGIGKTRAIYMPIPQSVPQVVLIDPDHCVGCGLCQLACPAEAVDYEQKPEEIEFEAGAIIVSTGYQLFDASRKKEYGFGKYPDVITNMQLERMLNSAGPTGGRVLVPSTGEPPKSVAFIQCVGSRDKTVGNEYCSRVCCMAALKNSQMVKERYPDTDVTIHYIDIRAAGEMYEEYYTRTQEMGVDFIRGKVAEVYSGEDGRPVVRFENTLESSVEEEAHDLVVLSTGYEPTKAAEGIGRMLNLARRPDRFFASAHPKMRPVDAPVSGVFLAGCASGPKEIQVSIAQGSACASKVMQLLGTGELEADPMGAHVDPDKCIGCRTCVEVCKFGKISIENKKAVVDEVSCYGCGDCSAACPVGAIQMRNFENEQILAQVREATAHKSQCPFIVAFLCNWCSYACADLTGMSRIRYPTNIRVIRTMCSARVNPEFVLEALKGGADGVLVAGCRMDECHYIHGNFDAKKRMDILKEVIKEIGLDPKRLRTLWISAAEGERFSNTINEFVKELEEIGPIGSEFKQECAVPGVEEVTQ</sequence>
<name>HDRA2_METAC</name>
<comment type="function">
    <text evidence="4">Part of a complex that catalyzes the reversible reduction of CoM-S-S-CoB to the thiol-coenzymes H-S-CoM (coenzyme M) and H-S-CoB (coenzyme B). Catalyzes the transfer of electrons from ferredoxin to CoM-S-S-CoB during methanogenesis from acetate. Electrons transfer from ferredoxin to CoM-S-S-CoB via HdrA2, HdrC2 and HdrB2. In addition, the complex can use electron bifurcation to direct electron pairs from reduced coenzyme F420 towards the reduction of both ferredoxin and CoB-CoM heterodisulfide. This activity may take place during Fe(III)-dependent anaerobic methane oxidation.</text>
</comment>
<comment type="catalytic activity">
    <reaction evidence="4">
        <text>coenzyme B + coenzyme M + 2 oxidized [2Fe-2S]-[ferredoxin] = coenzyme M-coenzyme B heterodisulfide + 2 reduced [2Fe-2S]-[ferredoxin] + 2 H(+)</text>
        <dbReference type="Rhea" id="RHEA:55160"/>
        <dbReference type="Rhea" id="RHEA-COMP:10000"/>
        <dbReference type="Rhea" id="RHEA-COMP:10001"/>
        <dbReference type="ChEBI" id="CHEBI:15378"/>
        <dbReference type="ChEBI" id="CHEBI:33737"/>
        <dbReference type="ChEBI" id="CHEBI:33738"/>
        <dbReference type="ChEBI" id="CHEBI:58319"/>
        <dbReference type="ChEBI" id="CHEBI:58411"/>
        <dbReference type="ChEBI" id="CHEBI:58596"/>
        <dbReference type="EC" id="1.8.7.3"/>
    </reaction>
</comment>
<comment type="catalytic activity">
    <reaction evidence="4">
        <text>coenzyme B + 2 oxidized coenzyme F420-(gamma-L-Glu)(n) + coenzyme M + 2 reduced [2Fe-2S]-[ferredoxin] + 4 H(+) = coenzyme M-coenzyme B heterodisulfide + 2 reduced coenzyme F420-(gamma-L-Glu)(n) + 2 oxidized [2Fe-2S]-[ferredoxin]</text>
        <dbReference type="Rhea" id="RHEA:55744"/>
        <dbReference type="Rhea" id="RHEA-COMP:10000"/>
        <dbReference type="Rhea" id="RHEA-COMP:10001"/>
        <dbReference type="Rhea" id="RHEA-COMP:12939"/>
        <dbReference type="Rhea" id="RHEA-COMP:14378"/>
        <dbReference type="ChEBI" id="CHEBI:15378"/>
        <dbReference type="ChEBI" id="CHEBI:33737"/>
        <dbReference type="ChEBI" id="CHEBI:33738"/>
        <dbReference type="ChEBI" id="CHEBI:58319"/>
        <dbReference type="ChEBI" id="CHEBI:58411"/>
        <dbReference type="ChEBI" id="CHEBI:58596"/>
        <dbReference type="ChEBI" id="CHEBI:133980"/>
        <dbReference type="ChEBI" id="CHEBI:139511"/>
        <dbReference type="EC" id="1.8.98.4"/>
    </reaction>
</comment>
<comment type="cofactor">
    <cofactor evidence="2 4">
        <name>[4Fe-4S] cluster</name>
        <dbReference type="ChEBI" id="CHEBI:49883"/>
    </cofactor>
    <text evidence="2 4">Binds 4 [4Fe-4S] cluster.</text>
</comment>
<comment type="cofactor">
    <cofactor evidence="4">
        <name>[2Fe-2S] cluster</name>
        <dbReference type="ChEBI" id="CHEBI:190135"/>
    </cofactor>
    <text evidence="4">Binds 1 [2Fe-2S] cluster.</text>
</comment>
<comment type="cofactor">
    <cofactor evidence="4">
        <name>FAD</name>
        <dbReference type="ChEBI" id="CHEBI:57692"/>
    </cofactor>
</comment>
<comment type="pathway">
    <text evidence="6">Cofactor metabolism; coenzyme M-coenzyme B heterodisulfide reduction; coenzyme B and coenzyme M from coenzyme M-coenzyme B heterodisulfide: step 1/1.</text>
</comment>
<comment type="subunit">
    <text evidence="4">The ferredoxin/F(420)H(2)-dependent CoB-CoM heterodisulfide reductase is composed of three subunits; HdrA2, HdrB2 and HdrC2.</text>
</comment>
<comment type="subcellular location">
    <subcellularLocation>
        <location evidence="4">Cytoplasm</location>
    </subcellularLocation>
</comment>
<comment type="induction">
    <text evidence="3">Induced by growth on methanol or acetate.</text>
</comment>
<comment type="similarity">
    <text evidence="6">Belongs to the HdrA family.</text>
</comment>
<keyword id="KW-0001">2Fe-2S</keyword>
<keyword id="KW-0004">4Fe-4S</keyword>
<keyword id="KW-0963">Cytoplasm</keyword>
<keyword id="KW-0274">FAD</keyword>
<keyword id="KW-0285">Flavoprotein</keyword>
<keyword id="KW-0408">Iron</keyword>
<keyword id="KW-0411">Iron-sulfur</keyword>
<keyword id="KW-0479">Metal-binding</keyword>
<keyword id="KW-0484">Methanogenesis</keyword>
<keyword id="KW-0560">Oxidoreductase</keyword>
<keyword id="KW-1185">Reference proteome</keyword>
<keyword id="KW-0677">Repeat</keyword>
<feature type="chain" id="PRO_0000150056" description="Ferredoxin/F(420)H(2)-dependent CoB-CoM heterodisulfide reductase subunit A">
    <location>
        <begin position="1"/>
        <end position="793"/>
    </location>
</feature>
<feature type="domain" description="4Fe-4S ferredoxin-type 1" evidence="2">
    <location>
        <begin position="233"/>
        <end position="264"/>
    </location>
</feature>
<feature type="domain" description="4Fe-4S ferredoxin-type 2" evidence="2">
    <location>
        <begin position="282"/>
        <end position="311"/>
    </location>
</feature>
<feature type="domain" description="4Fe-4S ferredoxin-type 3" evidence="2">
    <location>
        <begin position="571"/>
        <end position="600"/>
    </location>
</feature>
<feature type="domain" description="4Fe-4S ferredoxin-type 4" evidence="2">
    <location>
        <begin position="601"/>
        <end position="629"/>
    </location>
</feature>
<feature type="binding site" evidence="1">
    <location>
        <begin position="147"/>
        <end position="170"/>
    </location>
    <ligand>
        <name>FAD</name>
        <dbReference type="ChEBI" id="CHEBI:57692"/>
    </ligand>
</feature>
<feature type="binding site" evidence="2">
    <location>
        <position position="243"/>
    </location>
    <ligand>
        <name>[4Fe-4S] cluster</name>
        <dbReference type="ChEBI" id="CHEBI:49883"/>
        <label>1</label>
    </ligand>
</feature>
<feature type="binding site" evidence="2">
    <location>
        <position position="246"/>
    </location>
    <ligand>
        <name>[4Fe-4S] cluster</name>
        <dbReference type="ChEBI" id="CHEBI:49883"/>
        <label>1</label>
    </ligand>
</feature>
<feature type="binding site" evidence="2">
    <location>
        <position position="250"/>
    </location>
    <ligand>
        <name>[4Fe-4S] cluster</name>
        <dbReference type="ChEBI" id="CHEBI:49883"/>
        <label>1</label>
    </ligand>
</feature>
<feature type="binding site" evidence="2">
    <location>
        <position position="254"/>
    </location>
    <ligand>
        <name>[4Fe-4S] cluster</name>
        <dbReference type="ChEBI" id="CHEBI:49883"/>
        <label>2</label>
    </ligand>
</feature>
<feature type="binding site" evidence="2">
    <location>
        <position position="291"/>
    </location>
    <ligand>
        <name>[4Fe-4S] cluster</name>
        <dbReference type="ChEBI" id="CHEBI:49883"/>
        <label>2</label>
    </ligand>
</feature>
<feature type="binding site" evidence="2">
    <location>
        <position position="294"/>
    </location>
    <ligand>
        <name>[4Fe-4S] cluster</name>
        <dbReference type="ChEBI" id="CHEBI:49883"/>
        <label>2</label>
    </ligand>
</feature>
<feature type="binding site" evidence="2">
    <location>
        <position position="297"/>
    </location>
    <ligand>
        <name>[4Fe-4S] cluster</name>
        <dbReference type="ChEBI" id="CHEBI:49883"/>
        <label>2</label>
    </ligand>
</feature>
<feature type="binding site" evidence="2">
    <location>
        <position position="301"/>
    </location>
    <ligand>
        <name>[4Fe-4S] cluster</name>
        <dbReference type="ChEBI" id="CHEBI:49883"/>
        <label>1</label>
    </ligand>
</feature>
<feature type="binding site" evidence="2">
    <location>
        <position position="580"/>
    </location>
    <ligand>
        <name>[4Fe-4S] cluster</name>
        <dbReference type="ChEBI" id="CHEBI:49883"/>
        <label>3</label>
    </ligand>
</feature>
<feature type="binding site" evidence="2">
    <location>
        <position position="583"/>
    </location>
    <ligand>
        <name>[4Fe-4S] cluster</name>
        <dbReference type="ChEBI" id="CHEBI:49883"/>
        <label>3</label>
    </ligand>
</feature>
<feature type="binding site" evidence="2">
    <location>
        <position position="586"/>
    </location>
    <ligand>
        <name>[4Fe-4S] cluster</name>
        <dbReference type="ChEBI" id="CHEBI:49883"/>
        <label>3</label>
    </ligand>
</feature>
<feature type="binding site" evidence="2">
    <location>
        <position position="590"/>
    </location>
    <ligand>
        <name>[4Fe-4S] cluster</name>
        <dbReference type="ChEBI" id="CHEBI:49883"/>
        <label>4</label>
    </ligand>
</feature>
<feature type="binding site" evidence="2">
    <location>
        <position position="609"/>
    </location>
    <ligand>
        <name>[4Fe-4S] cluster</name>
        <dbReference type="ChEBI" id="CHEBI:49883"/>
        <label>4</label>
    </ligand>
</feature>
<feature type="binding site" evidence="2">
    <location>
        <position position="612"/>
    </location>
    <ligand>
        <name>[4Fe-4S] cluster</name>
        <dbReference type="ChEBI" id="CHEBI:49883"/>
        <label>4</label>
    </ligand>
</feature>
<feature type="binding site" evidence="2">
    <location>
        <position position="615"/>
    </location>
    <ligand>
        <name>[4Fe-4S] cluster</name>
        <dbReference type="ChEBI" id="CHEBI:49883"/>
        <label>4</label>
    </ligand>
</feature>
<feature type="binding site" evidence="2">
    <location>
        <position position="619"/>
    </location>
    <ligand>
        <name>[4Fe-4S] cluster</name>
        <dbReference type="ChEBI" id="CHEBI:49883"/>
        <label>3</label>
    </ligand>
</feature>
<dbReference type="EC" id="1.8.7.3" evidence="4"/>
<dbReference type="EC" id="1.8.98.4" evidence="4"/>
<dbReference type="EMBL" id="AE010299">
    <property type="protein sequence ID" value="AAM06247.1"/>
    <property type="molecule type" value="Genomic_DNA"/>
</dbReference>
<dbReference type="RefSeq" id="WP_011022820.1">
    <property type="nucleotide sequence ID" value="NC_003552.1"/>
</dbReference>
<dbReference type="SMR" id="Q8TM02"/>
<dbReference type="FunCoup" id="Q8TM02">
    <property type="interactions" value="1"/>
</dbReference>
<dbReference type="STRING" id="188937.MA_2868"/>
<dbReference type="EnsemblBacteria" id="AAM06247">
    <property type="protein sequence ID" value="AAM06247"/>
    <property type="gene ID" value="MA_2868"/>
</dbReference>
<dbReference type="GeneID" id="1474765"/>
<dbReference type="KEGG" id="mac:MA_2868"/>
<dbReference type="HOGENOM" id="CLU_020302_0_0_2"/>
<dbReference type="InParanoid" id="Q8TM02"/>
<dbReference type="OrthoDB" id="32867at2157"/>
<dbReference type="PhylomeDB" id="Q8TM02"/>
<dbReference type="BioCyc" id="MetaCyc:MONOMER-20159"/>
<dbReference type="UniPathway" id="UPA00647">
    <property type="reaction ID" value="UER00700"/>
</dbReference>
<dbReference type="Proteomes" id="UP000002487">
    <property type="component" value="Chromosome"/>
</dbReference>
<dbReference type="GO" id="GO:0005737">
    <property type="term" value="C:cytoplasm"/>
    <property type="evidence" value="ECO:0007669"/>
    <property type="project" value="UniProtKB-SubCell"/>
</dbReference>
<dbReference type="GO" id="GO:0051537">
    <property type="term" value="F:2 iron, 2 sulfur cluster binding"/>
    <property type="evidence" value="ECO:0007669"/>
    <property type="project" value="UniProtKB-KW"/>
</dbReference>
<dbReference type="GO" id="GO:0051539">
    <property type="term" value="F:4 iron, 4 sulfur cluster binding"/>
    <property type="evidence" value="ECO:0007669"/>
    <property type="project" value="UniProtKB-KW"/>
</dbReference>
<dbReference type="GO" id="GO:0046872">
    <property type="term" value="F:metal ion binding"/>
    <property type="evidence" value="ECO:0007669"/>
    <property type="project" value="UniProtKB-KW"/>
</dbReference>
<dbReference type="GO" id="GO:0016491">
    <property type="term" value="F:oxidoreductase activity"/>
    <property type="evidence" value="ECO:0007669"/>
    <property type="project" value="UniProtKB-KW"/>
</dbReference>
<dbReference type="GO" id="GO:0015948">
    <property type="term" value="P:methanogenesis"/>
    <property type="evidence" value="ECO:0007669"/>
    <property type="project" value="UniProtKB-KW"/>
</dbReference>
<dbReference type="FunFam" id="3.40.50.720:FF:000595">
    <property type="entry name" value="CoB--CoM heterodisulfide reductase iron-sulfur subunit A"/>
    <property type="match status" value="1"/>
</dbReference>
<dbReference type="Gene3D" id="3.30.70.20">
    <property type="match status" value="2"/>
</dbReference>
<dbReference type="Gene3D" id="3.50.50.60">
    <property type="entry name" value="FAD/NAD(P)-binding domain"/>
    <property type="match status" value="1"/>
</dbReference>
<dbReference type="Gene3D" id="3.40.50.720">
    <property type="entry name" value="NAD(P)-binding Rossmann-like Domain"/>
    <property type="match status" value="1"/>
</dbReference>
<dbReference type="InterPro" id="IPR017896">
    <property type="entry name" value="4Fe4S_Fe-S-bd"/>
</dbReference>
<dbReference type="InterPro" id="IPR017900">
    <property type="entry name" value="4Fe4S_Fe_S_CS"/>
</dbReference>
<dbReference type="InterPro" id="IPR036188">
    <property type="entry name" value="FAD/NAD-bd_sf"/>
</dbReference>
<dbReference type="InterPro" id="IPR023753">
    <property type="entry name" value="FAD/NAD-binding_dom"/>
</dbReference>
<dbReference type="InterPro" id="IPR039650">
    <property type="entry name" value="HdrA-like"/>
</dbReference>
<dbReference type="InterPro" id="IPR003813">
    <property type="entry name" value="MvhD/FlpD"/>
</dbReference>
<dbReference type="NCBIfam" id="NF040770">
    <property type="entry name" value="hetero_SS_HdrA2"/>
    <property type="match status" value="1"/>
</dbReference>
<dbReference type="PANTHER" id="PTHR43498:SF1">
    <property type="entry name" value="COB--COM HETERODISULFIDE REDUCTASE IRON-SULFUR SUBUNIT A"/>
    <property type="match status" value="1"/>
</dbReference>
<dbReference type="PANTHER" id="PTHR43498">
    <property type="entry name" value="FERREDOXIN:COB-COM HETERODISULFIDE REDUCTASE SUBUNIT A"/>
    <property type="match status" value="1"/>
</dbReference>
<dbReference type="Pfam" id="PF00037">
    <property type="entry name" value="Fer4"/>
    <property type="match status" value="1"/>
</dbReference>
<dbReference type="Pfam" id="PF14697">
    <property type="entry name" value="Fer4_21"/>
    <property type="match status" value="1"/>
</dbReference>
<dbReference type="Pfam" id="PF02662">
    <property type="entry name" value="FlpD"/>
    <property type="match status" value="1"/>
</dbReference>
<dbReference type="Pfam" id="PF07992">
    <property type="entry name" value="Pyr_redox_2"/>
    <property type="match status" value="1"/>
</dbReference>
<dbReference type="SUPFAM" id="SSF54862">
    <property type="entry name" value="4Fe-4S ferredoxins"/>
    <property type="match status" value="1"/>
</dbReference>
<dbReference type="SUPFAM" id="SSF51905">
    <property type="entry name" value="FAD/NAD(P)-binding domain"/>
    <property type="match status" value="1"/>
</dbReference>
<dbReference type="PROSITE" id="PS00198">
    <property type="entry name" value="4FE4S_FER_1"/>
    <property type="match status" value="2"/>
</dbReference>
<dbReference type="PROSITE" id="PS51379">
    <property type="entry name" value="4FE4S_FER_2"/>
    <property type="match status" value="4"/>
</dbReference>
<protein>
    <recommendedName>
        <fullName evidence="6">Ferredoxin/F(420)H(2)-dependent CoB-CoM heterodisulfide reductase subunit A</fullName>
        <ecNumber evidence="4">1.8.7.3</ecNumber>
        <ecNumber evidence="4">1.8.98.4</ecNumber>
    </recommendedName>
    <alternativeName>
        <fullName evidence="6">Coenzyme F420:CoB-CoM heterodisulfide,ferredoxin reductase subunit A</fullName>
    </alternativeName>
    <alternativeName>
        <fullName evidence="6">Ferredoxin:CoB-CoM heterodisulfide reductase subunit A</fullName>
    </alternativeName>
</protein>
<proteinExistence type="evidence at protein level"/>
<organism>
    <name type="scientific">Methanosarcina acetivorans (strain ATCC 35395 / DSM 2834 / JCM 12185 / C2A)</name>
    <dbReference type="NCBI Taxonomy" id="188937"/>
    <lineage>
        <taxon>Archaea</taxon>
        <taxon>Methanobacteriati</taxon>
        <taxon>Methanobacteriota</taxon>
        <taxon>Stenosarchaea group</taxon>
        <taxon>Methanomicrobia</taxon>
        <taxon>Methanosarcinales</taxon>
        <taxon>Methanosarcinaceae</taxon>
        <taxon>Methanosarcina</taxon>
    </lineage>
</organism>
<reference key="1">
    <citation type="journal article" date="2002" name="Genome Res.">
        <title>The genome of Methanosarcina acetivorans reveals extensive metabolic and physiological diversity.</title>
        <authorList>
            <person name="Galagan J.E."/>
            <person name="Nusbaum C."/>
            <person name="Roy A."/>
            <person name="Endrizzi M.G."/>
            <person name="Macdonald P."/>
            <person name="FitzHugh W."/>
            <person name="Calvo S."/>
            <person name="Engels R."/>
            <person name="Smirnov S."/>
            <person name="Atnoor D."/>
            <person name="Brown A."/>
            <person name="Allen N."/>
            <person name="Naylor J."/>
            <person name="Stange-Thomann N."/>
            <person name="DeArellano K."/>
            <person name="Johnson R."/>
            <person name="Linton L."/>
            <person name="McEwan P."/>
            <person name="McKernan K."/>
            <person name="Talamas J."/>
            <person name="Tirrell A."/>
            <person name="Ye W."/>
            <person name="Zimmer A."/>
            <person name="Barber R.D."/>
            <person name="Cann I."/>
            <person name="Graham D.E."/>
            <person name="Grahame D.A."/>
            <person name="Guss A.M."/>
            <person name="Hedderich R."/>
            <person name="Ingram-Smith C."/>
            <person name="Kuettner H.C."/>
            <person name="Krzycki J.A."/>
            <person name="Leigh J.A."/>
            <person name="Li W."/>
            <person name="Liu J."/>
            <person name="Mukhopadhyay B."/>
            <person name="Reeve J.N."/>
            <person name="Smith K."/>
            <person name="Springer T.A."/>
            <person name="Umayam L.A."/>
            <person name="White O."/>
            <person name="White R.H."/>
            <person name="de Macario E.C."/>
            <person name="Ferry J.G."/>
            <person name="Jarrell K.F."/>
            <person name="Jing H."/>
            <person name="Macario A.J.L."/>
            <person name="Paulsen I.T."/>
            <person name="Pritchett M."/>
            <person name="Sowers K.R."/>
            <person name="Swanson R.V."/>
            <person name="Zinder S.H."/>
            <person name="Lander E."/>
            <person name="Metcalf W.W."/>
            <person name="Birren B."/>
        </authorList>
    </citation>
    <scope>NUCLEOTIDE SEQUENCE [LARGE SCALE GENOMIC DNA]</scope>
    <source>
        <strain>ATCC 35395 / DSM 2834 / JCM 12185 / C2A</strain>
    </source>
</reference>
<reference key="2">
    <citation type="journal article" date="2010" name="Mol. Microbiol.">
        <title>Methanogenesis by Methanosarcina acetivorans involves two structurally and functionally distinct classes of heterodisulfide reductase.</title>
        <authorList>
            <person name="Buan N.R."/>
            <person name="Metcalf W.W."/>
        </authorList>
    </citation>
    <scope>INDUCTION</scope>
    <source>
        <strain>ATCC 35395 / DSM 2834 / JCM 12185 / C2A</strain>
    </source>
</reference>
<reference key="3">
    <citation type="journal article" date="2017" name="MBio">
        <title>A ferredoxin- and F420H2-dependent, electron-bifurcating, heterodisulfide reductase with homologs in the domains Bacteria and Archaea.</title>
        <authorList>
            <person name="Yan Z."/>
            <person name="Wang M."/>
            <person name="Ferry J.G."/>
        </authorList>
    </citation>
    <scope>FUNCTION</scope>
    <scope>CATALYTIC ACTIVITY</scope>
    <scope>COFACTOR</scope>
    <scope>SUBUNIT</scope>
    <scope>SUBCELLULAR LOCATION</scope>
    <source>
        <strain>ATCC 35395 / DSM 2834 / JCM 12185 / C2A</strain>
    </source>
</reference>